<accession>Q21FL0</accession>
<name>NHAA2_SACD2</name>
<protein>
    <recommendedName>
        <fullName evidence="1">Na(+)/H(+) antiporter NhaA 2</fullName>
    </recommendedName>
    <alternativeName>
        <fullName evidence="1">Sodium/proton antiporter NhaA 2</fullName>
    </alternativeName>
</protein>
<reference key="1">
    <citation type="journal article" date="2008" name="PLoS Genet.">
        <title>Complete genome sequence of the complex carbohydrate-degrading marine bacterium, Saccharophagus degradans strain 2-40 T.</title>
        <authorList>
            <person name="Weiner R.M."/>
            <person name="Taylor L.E. II"/>
            <person name="Henrissat B."/>
            <person name="Hauser L."/>
            <person name="Land M."/>
            <person name="Coutinho P.M."/>
            <person name="Rancurel C."/>
            <person name="Saunders E.H."/>
            <person name="Longmire A.G."/>
            <person name="Zhang H."/>
            <person name="Bayer E.A."/>
            <person name="Gilbert H.J."/>
            <person name="Larimer F."/>
            <person name="Zhulin I.B."/>
            <person name="Ekborg N.A."/>
            <person name="Lamed R."/>
            <person name="Richardson P.M."/>
            <person name="Borovok I."/>
            <person name="Hutcheson S."/>
        </authorList>
    </citation>
    <scope>NUCLEOTIDE SEQUENCE [LARGE SCALE GENOMIC DNA]</scope>
    <source>
        <strain>2-40 / ATCC 43961 / DSM 17024</strain>
    </source>
</reference>
<evidence type="ECO:0000255" key="1">
    <source>
        <dbReference type="HAMAP-Rule" id="MF_01844"/>
    </source>
</evidence>
<sequence>MAQQETAGGVLLIAASILALIFANSYLSGFYNGVLNLPLVVAIGAFEISKPLLLWVNDGLMALFFLMVGLEVKREVLEGHLSQPSQVVLPGLAALAGVAFPAIIYASFNWQDPTALRGWAIPSATDIAFALGVFSLFGRHLPVSLKLFLLSVAIFDDIAAIVIIALFYSHELSTLSLLVAGIGIVMLFVLNRLKIRHVSPFMFVGLVVWAAVLKSGVHATLAGFVIAWFIPLKHKNIHDEPMLLSLEHALQPWVAYFILPFFAFVNAGVHLGGIGLDTLTAPVTLGIIVGLFVGKQLGIFSVCWLSIKLRIAKLPEGATWRELYGVCLLAGIGFTMSLFIGSLAFEGANSEMVASVKLGVLFGSLLSAICGALILTNSRKIK</sequence>
<feature type="chain" id="PRO_0000334404" description="Na(+)/H(+) antiporter NhaA 2">
    <location>
        <begin position="1"/>
        <end position="382"/>
    </location>
</feature>
<feature type="transmembrane region" description="Helical" evidence="1">
    <location>
        <begin position="7"/>
        <end position="27"/>
    </location>
</feature>
<feature type="transmembrane region" description="Helical" evidence="1">
    <location>
        <begin position="28"/>
        <end position="48"/>
    </location>
</feature>
<feature type="transmembrane region" description="Helical" evidence="1">
    <location>
        <begin position="52"/>
        <end position="72"/>
    </location>
</feature>
<feature type="transmembrane region" description="Helical" evidence="1">
    <location>
        <begin position="88"/>
        <end position="108"/>
    </location>
</feature>
<feature type="transmembrane region" description="Helical" evidence="1">
    <location>
        <begin position="118"/>
        <end position="138"/>
    </location>
</feature>
<feature type="transmembrane region" description="Helical" evidence="1">
    <location>
        <begin position="147"/>
        <end position="167"/>
    </location>
</feature>
<feature type="transmembrane region" description="Helical" evidence="1">
    <location>
        <begin position="170"/>
        <end position="190"/>
    </location>
</feature>
<feature type="transmembrane region" description="Helical" evidence="1">
    <location>
        <begin position="206"/>
        <end position="226"/>
    </location>
</feature>
<feature type="transmembrane region" description="Helical" evidence="1">
    <location>
        <begin position="254"/>
        <end position="274"/>
    </location>
</feature>
<feature type="transmembrane region" description="Helical" evidence="1">
    <location>
        <begin position="285"/>
        <end position="305"/>
    </location>
</feature>
<feature type="transmembrane region" description="Helical" evidence="1">
    <location>
        <begin position="325"/>
        <end position="345"/>
    </location>
</feature>
<feature type="transmembrane region" description="Helical" evidence="1">
    <location>
        <begin position="356"/>
        <end position="376"/>
    </location>
</feature>
<gene>
    <name evidence="1" type="primary">nhaA2</name>
    <name type="ordered locus">Sde_3264</name>
</gene>
<comment type="function">
    <text evidence="1">Na(+)/H(+) antiporter that extrudes sodium in exchange for external protons.</text>
</comment>
<comment type="catalytic activity">
    <reaction evidence="1">
        <text>Na(+)(in) + 2 H(+)(out) = Na(+)(out) + 2 H(+)(in)</text>
        <dbReference type="Rhea" id="RHEA:29251"/>
        <dbReference type="ChEBI" id="CHEBI:15378"/>
        <dbReference type="ChEBI" id="CHEBI:29101"/>
    </reaction>
    <physiologicalReaction direction="left-to-right" evidence="1">
        <dbReference type="Rhea" id="RHEA:29252"/>
    </physiologicalReaction>
</comment>
<comment type="subcellular location">
    <subcellularLocation>
        <location evidence="1">Cell inner membrane</location>
        <topology evidence="1">Multi-pass membrane protein</topology>
    </subcellularLocation>
</comment>
<comment type="similarity">
    <text evidence="1">Belongs to the NhaA Na(+)/H(+) (TC 2.A.33) antiporter family.</text>
</comment>
<proteinExistence type="inferred from homology"/>
<keyword id="KW-0050">Antiport</keyword>
<keyword id="KW-0997">Cell inner membrane</keyword>
<keyword id="KW-1003">Cell membrane</keyword>
<keyword id="KW-0406">Ion transport</keyword>
<keyword id="KW-0472">Membrane</keyword>
<keyword id="KW-1185">Reference proteome</keyword>
<keyword id="KW-0915">Sodium</keyword>
<keyword id="KW-0739">Sodium transport</keyword>
<keyword id="KW-0812">Transmembrane</keyword>
<keyword id="KW-1133">Transmembrane helix</keyword>
<keyword id="KW-0813">Transport</keyword>
<organism>
    <name type="scientific">Saccharophagus degradans (strain 2-40 / ATCC 43961 / DSM 17024)</name>
    <dbReference type="NCBI Taxonomy" id="203122"/>
    <lineage>
        <taxon>Bacteria</taxon>
        <taxon>Pseudomonadati</taxon>
        <taxon>Pseudomonadota</taxon>
        <taxon>Gammaproteobacteria</taxon>
        <taxon>Cellvibrionales</taxon>
        <taxon>Cellvibrionaceae</taxon>
        <taxon>Saccharophagus</taxon>
    </lineage>
</organism>
<dbReference type="EMBL" id="CP000282">
    <property type="protein sequence ID" value="ABD82519.1"/>
    <property type="molecule type" value="Genomic_DNA"/>
</dbReference>
<dbReference type="SMR" id="Q21FL0"/>
<dbReference type="STRING" id="203122.Sde_3264"/>
<dbReference type="KEGG" id="sde:Sde_3264"/>
<dbReference type="eggNOG" id="COG3004">
    <property type="taxonomic scope" value="Bacteria"/>
</dbReference>
<dbReference type="HOGENOM" id="CLU_015803_1_0_6"/>
<dbReference type="OrthoDB" id="9808135at2"/>
<dbReference type="Proteomes" id="UP000001947">
    <property type="component" value="Chromosome"/>
</dbReference>
<dbReference type="GO" id="GO:0005886">
    <property type="term" value="C:plasma membrane"/>
    <property type="evidence" value="ECO:0007669"/>
    <property type="project" value="UniProtKB-SubCell"/>
</dbReference>
<dbReference type="GO" id="GO:0015385">
    <property type="term" value="F:sodium:proton antiporter activity"/>
    <property type="evidence" value="ECO:0007669"/>
    <property type="project" value="TreeGrafter"/>
</dbReference>
<dbReference type="GO" id="GO:0006885">
    <property type="term" value="P:regulation of pH"/>
    <property type="evidence" value="ECO:0007669"/>
    <property type="project" value="InterPro"/>
</dbReference>
<dbReference type="Gene3D" id="1.20.1530.10">
    <property type="entry name" value="Na+/H+ antiporter like domain"/>
    <property type="match status" value="1"/>
</dbReference>
<dbReference type="HAMAP" id="MF_01844">
    <property type="entry name" value="NhaA"/>
    <property type="match status" value="1"/>
</dbReference>
<dbReference type="InterPro" id="IPR023171">
    <property type="entry name" value="Na/H_antiporter_dom_sf"/>
</dbReference>
<dbReference type="InterPro" id="IPR004670">
    <property type="entry name" value="NhaA"/>
</dbReference>
<dbReference type="NCBIfam" id="TIGR00773">
    <property type="entry name" value="NhaA"/>
    <property type="match status" value="1"/>
</dbReference>
<dbReference type="NCBIfam" id="NF007111">
    <property type="entry name" value="PRK09560.1"/>
    <property type="match status" value="1"/>
</dbReference>
<dbReference type="NCBIfam" id="NF007112">
    <property type="entry name" value="PRK09561.1"/>
    <property type="match status" value="1"/>
</dbReference>
<dbReference type="PANTHER" id="PTHR30341:SF0">
    <property type="entry name" value="NA(+)_H(+) ANTIPORTER NHAA"/>
    <property type="match status" value="1"/>
</dbReference>
<dbReference type="PANTHER" id="PTHR30341">
    <property type="entry name" value="SODIUM ION/PROTON ANTIPORTER NHAA-RELATED"/>
    <property type="match status" value="1"/>
</dbReference>
<dbReference type="Pfam" id="PF06965">
    <property type="entry name" value="Na_H_antiport_1"/>
    <property type="match status" value="1"/>
</dbReference>